<comment type="function">
    <text evidence="1">Effector protein involved in non-host recognition.</text>
</comment>
<comment type="subcellular location">
    <subcellularLocation>
        <location>Secreted</location>
    </subcellularLocation>
    <text evidence="1">Secreted via type III secretion system (T3SS).</text>
</comment>
<evidence type="ECO:0000250" key="1"/>
<evidence type="ECO:0000256" key="2">
    <source>
        <dbReference type="SAM" id="MobiDB-lite"/>
    </source>
</evidence>
<proteinExistence type="inferred from homology"/>
<accession>Q8RK06</accession>
<dbReference type="EMBL" id="AJ439731">
    <property type="protein sequence ID" value="CAD29305.1"/>
    <property type="molecule type" value="Genomic_DNA"/>
</dbReference>
<dbReference type="GO" id="GO:0005576">
    <property type="term" value="C:extracellular region"/>
    <property type="evidence" value="ECO:0007669"/>
    <property type="project" value="UniProtKB-SubCell"/>
</dbReference>
<dbReference type="GO" id="GO:0052040">
    <property type="term" value="P:symbiont-mediated perturbation of host programmed cell death"/>
    <property type="evidence" value="ECO:0007669"/>
    <property type="project" value="UniProtKB-KW"/>
</dbReference>
<dbReference type="InterPro" id="IPR053430">
    <property type="entry name" value="Plant_immune_effector"/>
</dbReference>
<dbReference type="NCBIfam" id="NF041309">
    <property type="entry name" value="XopB"/>
    <property type="match status" value="1"/>
</dbReference>
<protein>
    <recommendedName>
        <fullName>Effector protein AvrPphDPgy</fullName>
    </recommendedName>
</protein>
<organism>
    <name type="scientific">Pseudomonas savastanoi pv. glycinea</name>
    <name type="common">Pseudomonas syringae pv. glycinea</name>
    <dbReference type="NCBI Taxonomy" id="318"/>
    <lineage>
        <taxon>Bacteria</taxon>
        <taxon>Pseudomonadati</taxon>
        <taxon>Pseudomonadota</taxon>
        <taxon>Gammaproteobacteria</taxon>
        <taxon>Pseudomonadales</taxon>
        <taxon>Pseudomonadaceae</taxon>
        <taxon>Pseudomonas</taxon>
    </lineage>
</organism>
<sequence>MNPLRSIQHNITTPPISGGQPLDAVGPQAQQSHPKRISPSQLSQSAHQALERLSANAEHQRLASLVRNALQDGTFQFQSSNHTQVTYKASICLPADTDTVRTDHLINNELTVQARLNDQSEYDIVSAHLHGSSKAISFDVPSPPPAHGSASSVLSERTHLGMSRVLSQDAVDSSSPLLSSPDHSRPPSQHIGSVRRDSDSLVSDNPVVQALLSFAQADQQFPTQAASIAGVQLEMRPRRDIEKALEEFKGAFTVEKAQLMSGANSSERVDEDVNADIHIPLLLKAIERGAAAFGPNALIGQNSAKAFLASCAPKITSNDDVLSEFINRKLKGDDDLQVRLGAQELLHVATKKEFQLGGLAGSIGVSSILGSAWELGASELLKNAIFGKNFSPSQYALQLAGIDSVPPLMIESMDTMCVLAIIKGMKGEEWSMSDLLPKALKAGAISSVVSFPNNVLQYAGFKSKVGDLAANSMTTEAAIFGAASGIPPEVKESEELMRAGLFQSMKDGVMAHPGEGADTKKTIERMTRHALDIAPGESTAVKSMGLASIVGMIPLIASNKATGLLSEQVLRIFRSTVFNPIEAIALNALALGGRVNVPGLFDSDNAKHARVVQTILARASQHMEAGDRDISAEELHQMLAPRSEFLRHVGSAIVNGMNASFEAIPALVRKLGYGEAPLAERIPYQDLAVPDTSRQPAP</sequence>
<feature type="chain" id="PRO_0000064773" description="Effector protein AvrPphDPgy">
    <location>
        <begin position="1"/>
        <end position="698"/>
    </location>
</feature>
<feature type="region of interest" description="Disordered" evidence="2">
    <location>
        <begin position="1"/>
        <end position="36"/>
    </location>
</feature>
<feature type="region of interest" description="Disordered" evidence="2">
    <location>
        <begin position="171"/>
        <end position="200"/>
    </location>
</feature>
<feature type="compositionally biased region" description="Polar residues" evidence="2">
    <location>
        <begin position="1"/>
        <end position="15"/>
    </location>
</feature>
<feature type="compositionally biased region" description="Low complexity" evidence="2">
    <location>
        <begin position="172"/>
        <end position="181"/>
    </location>
</feature>
<keyword id="KW-0928">Hypersensitive response elicitation</keyword>
<keyword id="KW-0964">Secreted</keyword>
<keyword id="KW-0843">Virulence</keyword>
<name>AVRD1_PSESG</name>
<reference key="1">
    <citation type="journal article" date="2002" name="Mol. Plant Pathol.">
        <title>Location and activity of members of a family of virPphA homologues in pathovars of Pseudomonas syringae and P.savastanoi.</title>
        <authorList>
            <person name="Jackson R.W."/>
            <person name="Mansfield J.W."/>
            <person name="Ammouneh H."/>
            <person name="Dutton L.C."/>
            <person name="Wharton B."/>
            <person name="Ortiz-Barredo A."/>
            <person name="Arnold D.L."/>
            <person name="Tsiamis G."/>
            <person name="Sesma A."/>
            <person name="Butcher D."/>
            <person name="Boch J."/>
            <person name="Kim Y.J."/>
            <person name="Martin G.B."/>
            <person name="Tegli S."/>
            <person name="Murillo J."/>
            <person name="Vivian A."/>
        </authorList>
        <dbReference type="AGRICOLA" id="IND23295115"/>
    </citation>
    <scope>NUCLEOTIDE SEQUENCE [GENOMIC DNA]</scope>
    <source>
        <strain>49a/90</strain>
    </source>
</reference>
<gene>
    <name type="primary">avrPphDPgy</name>
</gene>